<comment type="function">
    <text evidence="1">Part of the ATP-binding cassette (ABC) transport system PsaABC involved in manganese import (By similarity). Binds manganese with high affinity and specificity and delivers it to the membrane permease for translocation into the cytoplasm (By similarity). Also acts as an adhesin which is involved on adherence to extracellular matrix (By similarity).</text>
</comment>
<comment type="subcellular location">
    <subcellularLocation>
        <location evidence="2">Cell membrane</location>
        <topology evidence="2">Lipid-anchor</topology>
    </subcellularLocation>
</comment>
<comment type="similarity">
    <text evidence="3">Belongs to the bacterial solute-binding protein 9 family. Lipoprotein receptor antigen (Lrai) subfamily.</text>
</comment>
<evidence type="ECO:0000250" key="1">
    <source>
        <dbReference type="UniProtKB" id="P0A4G2"/>
    </source>
</evidence>
<evidence type="ECO:0000255" key="2">
    <source>
        <dbReference type="PROSITE-ProRule" id="PRU00303"/>
    </source>
</evidence>
<evidence type="ECO:0000305" key="3"/>
<accession>P0A4G3</accession>
<accession>P72538</accession>
<accession>Q54720</accession>
<accession>Q9L5X2</accession>
<accession>Q9L5X3</accession>
<accession>Q9L5X4</accession>
<accession>Q9R6P5</accession>
<dbReference type="EMBL" id="AF248230">
    <property type="protein sequence ID" value="AAF70664.1"/>
    <property type="molecule type" value="Genomic_DNA"/>
</dbReference>
<dbReference type="EMBL" id="AE007317">
    <property type="protein sequence ID" value="AAL00298.1"/>
    <property type="molecule type" value="Genomic_DNA"/>
</dbReference>
<dbReference type="PIR" id="E98058">
    <property type="entry name" value="E98058"/>
</dbReference>
<dbReference type="RefSeq" id="NP_359087.1">
    <property type="nucleotide sequence ID" value="NC_003098.1"/>
</dbReference>
<dbReference type="RefSeq" id="WP_000733056.1">
    <property type="nucleotide sequence ID" value="NC_003098.1"/>
</dbReference>
<dbReference type="SMR" id="P0A4G3"/>
<dbReference type="STRING" id="171101.spr1494"/>
<dbReference type="GeneID" id="45653136"/>
<dbReference type="KEGG" id="spr:spr1494"/>
<dbReference type="PATRIC" id="fig|171101.6.peg.1613"/>
<dbReference type="eggNOG" id="COG0803">
    <property type="taxonomic scope" value="Bacteria"/>
</dbReference>
<dbReference type="HOGENOM" id="CLU_016838_1_1_9"/>
<dbReference type="Proteomes" id="UP000000586">
    <property type="component" value="Chromosome"/>
</dbReference>
<dbReference type="GO" id="GO:0005886">
    <property type="term" value="C:plasma membrane"/>
    <property type="evidence" value="ECO:0007669"/>
    <property type="project" value="UniProtKB-SubCell"/>
</dbReference>
<dbReference type="GO" id="GO:0046872">
    <property type="term" value="F:metal ion binding"/>
    <property type="evidence" value="ECO:0007669"/>
    <property type="project" value="UniProtKB-KW"/>
</dbReference>
<dbReference type="GO" id="GO:0007155">
    <property type="term" value="P:cell adhesion"/>
    <property type="evidence" value="ECO:0007669"/>
    <property type="project" value="InterPro"/>
</dbReference>
<dbReference type="GO" id="GO:0030001">
    <property type="term" value="P:metal ion transport"/>
    <property type="evidence" value="ECO:0007669"/>
    <property type="project" value="InterPro"/>
</dbReference>
<dbReference type="CDD" id="cd01137">
    <property type="entry name" value="PsaA"/>
    <property type="match status" value="1"/>
</dbReference>
<dbReference type="Gene3D" id="3.40.50.1980">
    <property type="entry name" value="Nitrogenase molybdenum iron protein domain"/>
    <property type="match status" value="2"/>
</dbReference>
<dbReference type="InterPro" id="IPR006129">
    <property type="entry name" value="AdhesinB"/>
</dbReference>
<dbReference type="InterPro" id="IPR050492">
    <property type="entry name" value="Bact_metal-bind_prot9"/>
</dbReference>
<dbReference type="InterPro" id="IPR006128">
    <property type="entry name" value="Lipoprotein_PsaA-like"/>
</dbReference>
<dbReference type="InterPro" id="IPR006127">
    <property type="entry name" value="ZnuA-like"/>
</dbReference>
<dbReference type="NCBIfam" id="NF040928">
    <property type="entry name" value="ABC_lipo_SloC"/>
    <property type="match status" value="1"/>
</dbReference>
<dbReference type="PANTHER" id="PTHR42953">
    <property type="entry name" value="HIGH-AFFINITY ZINC UPTAKE SYSTEM PROTEIN ZNUA-RELATED"/>
    <property type="match status" value="1"/>
</dbReference>
<dbReference type="PANTHER" id="PTHR42953:SF1">
    <property type="entry name" value="METAL-BINDING PROTEIN HI_0362-RELATED"/>
    <property type="match status" value="1"/>
</dbReference>
<dbReference type="Pfam" id="PF01297">
    <property type="entry name" value="ZnuA"/>
    <property type="match status" value="1"/>
</dbReference>
<dbReference type="PRINTS" id="PR00691">
    <property type="entry name" value="ADHESINB"/>
</dbReference>
<dbReference type="PRINTS" id="PR00690">
    <property type="entry name" value="ADHESNFAMILY"/>
</dbReference>
<dbReference type="SUPFAM" id="SSF53807">
    <property type="entry name" value="Helical backbone' metal receptor"/>
    <property type="match status" value="1"/>
</dbReference>
<dbReference type="PROSITE" id="PS51257">
    <property type="entry name" value="PROKAR_LIPOPROTEIN"/>
    <property type="match status" value="1"/>
</dbReference>
<keyword id="KW-1003">Cell membrane</keyword>
<keyword id="KW-0449">Lipoprotein</keyword>
<keyword id="KW-0464">Manganese</keyword>
<keyword id="KW-0472">Membrane</keyword>
<keyword id="KW-0479">Metal-binding</keyword>
<keyword id="KW-0564">Palmitate</keyword>
<keyword id="KW-1185">Reference proteome</keyword>
<keyword id="KW-0732">Signal</keyword>
<keyword id="KW-0813">Transport</keyword>
<name>MTSA_STRR6</name>
<proteinExistence type="inferred from homology"/>
<reference key="1">
    <citation type="submission" date="2000-03" db="EMBL/GenBank/DDBJ databases">
        <title>Identification of a psaA gene in viridans streptococcal strains.</title>
        <authorList>
            <person name="Perez A."/>
            <person name="Jado I."/>
            <person name="Casal J."/>
        </authorList>
    </citation>
    <scope>NUCLEOTIDE SEQUENCE [GENOMIC DNA]</scope>
</reference>
<reference key="2">
    <citation type="journal article" date="2001" name="J. Bacteriol.">
        <title>Genome of the bacterium Streptococcus pneumoniae strain R6.</title>
        <authorList>
            <person name="Hoskins J."/>
            <person name="Alborn W.E. Jr."/>
            <person name="Arnold J."/>
            <person name="Blaszczak L.C."/>
            <person name="Burgett S."/>
            <person name="DeHoff B.S."/>
            <person name="Estrem S.T."/>
            <person name="Fritz L."/>
            <person name="Fu D.-J."/>
            <person name="Fuller W."/>
            <person name="Geringer C."/>
            <person name="Gilmour R."/>
            <person name="Glass J.S."/>
            <person name="Khoja H."/>
            <person name="Kraft A.R."/>
            <person name="Lagace R.E."/>
            <person name="LeBlanc D.J."/>
            <person name="Lee L.N."/>
            <person name="Lefkowitz E.J."/>
            <person name="Lu J."/>
            <person name="Matsushima P."/>
            <person name="McAhren S.M."/>
            <person name="McHenney M."/>
            <person name="McLeaster K."/>
            <person name="Mundy C.W."/>
            <person name="Nicas T.I."/>
            <person name="Norris F.H."/>
            <person name="O'Gara M."/>
            <person name="Peery R.B."/>
            <person name="Robertson G.T."/>
            <person name="Rockey P."/>
            <person name="Sun P.-M."/>
            <person name="Winkler M.E."/>
            <person name="Yang Y."/>
            <person name="Young-Bellido M."/>
            <person name="Zhao G."/>
            <person name="Zook C.A."/>
            <person name="Baltz R.H."/>
            <person name="Jaskunas S.R."/>
            <person name="Rosteck P.R. Jr."/>
            <person name="Skatrud P.L."/>
            <person name="Glass J.I."/>
        </authorList>
    </citation>
    <scope>NUCLEOTIDE SEQUENCE [LARGE SCALE GENOMIC DNA]</scope>
    <source>
        <strain>ATCC BAA-255 / R6</strain>
    </source>
</reference>
<feature type="signal peptide" evidence="2">
    <location>
        <begin position="1"/>
        <end position="19"/>
    </location>
</feature>
<feature type="chain" id="PRO_0000031893" description="Manganese ABC transporter substrate-binding lipoprotein PsaA">
    <location>
        <begin position="20"/>
        <end position="309"/>
    </location>
</feature>
<feature type="binding site" evidence="1">
    <location>
        <position position="67"/>
    </location>
    <ligand>
        <name>Mn(2+)</name>
        <dbReference type="ChEBI" id="CHEBI:29035"/>
    </ligand>
</feature>
<feature type="binding site" evidence="1">
    <location>
        <position position="139"/>
    </location>
    <ligand>
        <name>Mn(2+)</name>
        <dbReference type="ChEBI" id="CHEBI:29035"/>
    </ligand>
</feature>
<feature type="binding site" evidence="1">
    <location>
        <position position="205"/>
    </location>
    <ligand>
        <name>Mn(2+)</name>
        <dbReference type="ChEBI" id="CHEBI:29035"/>
    </ligand>
</feature>
<feature type="binding site" evidence="1">
    <location>
        <position position="280"/>
    </location>
    <ligand>
        <name>Mn(2+)</name>
        <dbReference type="ChEBI" id="CHEBI:29035"/>
    </ligand>
</feature>
<feature type="lipid moiety-binding region" description="N-palmitoyl cysteine" evidence="2">
    <location>
        <position position="20"/>
    </location>
</feature>
<feature type="lipid moiety-binding region" description="S-diacylglycerol cysteine" evidence="2">
    <location>
        <position position="20"/>
    </location>
</feature>
<gene>
    <name type="primary">psaA</name>
    <name type="ordered locus">spr1494</name>
</gene>
<protein>
    <recommendedName>
        <fullName>Manganese ABC transporter substrate-binding lipoprotein PsaA</fullName>
    </recommendedName>
    <alternativeName>
        <fullName>Pneumococcal surface adhesin A</fullName>
    </alternativeName>
</protein>
<organism>
    <name type="scientific">Streptococcus pneumoniae (strain ATCC BAA-255 / R6)</name>
    <dbReference type="NCBI Taxonomy" id="171101"/>
    <lineage>
        <taxon>Bacteria</taxon>
        <taxon>Bacillati</taxon>
        <taxon>Bacillota</taxon>
        <taxon>Bacilli</taxon>
        <taxon>Lactobacillales</taxon>
        <taxon>Streptococcaceae</taxon>
        <taxon>Streptococcus</taxon>
    </lineage>
</organism>
<sequence length="309" mass="34594">MKKLGTLLVLFLSAIILVACASGKKDTTSGQKLKVVATNSIIADITKNIAGDKIDLHSIVPIGQDPHEYEPLPEDVKKTSEADLIFYNGINLETGGNAWFTKLVENAKKTENKDYFAVSDGVDVIYLEGQNEKGKEDPHAWLNLENGIIFAKNIAKQLSAKDPNNKEFYEKNLKEYTDKLDKLDKESKDKFNKIPAEKKLIVTSEGAFKYFSKAYGVPSAYIWEINTEEEGTPEQIKTLVEKLRQTKVPSLFVESSVDDRPMKTVSQDTNIPIYAQIFTDSIAEQGKEGDSYYSMMKYNLDKIAEGLAK</sequence>